<proteinExistence type="inferred from homology"/>
<gene>
    <name type="ORF">SPCC18.02</name>
</gene>
<reference evidence="4" key="1">
    <citation type="journal article" date="2002" name="Nature">
        <title>The genome sequence of Schizosaccharomyces pombe.</title>
        <authorList>
            <person name="Wood V."/>
            <person name="Gwilliam R."/>
            <person name="Rajandream M.A."/>
            <person name="Lyne M.H."/>
            <person name="Lyne R."/>
            <person name="Stewart A."/>
            <person name="Sgouros J.G."/>
            <person name="Peat N."/>
            <person name="Hayles J."/>
            <person name="Baker S.G."/>
            <person name="Basham D."/>
            <person name="Bowman S."/>
            <person name="Brooks K."/>
            <person name="Brown D."/>
            <person name="Brown S."/>
            <person name="Chillingworth T."/>
            <person name="Churcher C.M."/>
            <person name="Collins M."/>
            <person name="Connor R."/>
            <person name="Cronin A."/>
            <person name="Davis P."/>
            <person name="Feltwell T."/>
            <person name="Fraser A."/>
            <person name="Gentles S."/>
            <person name="Goble A."/>
            <person name="Hamlin N."/>
            <person name="Harris D.E."/>
            <person name="Hidalgo J."/>
            <person name="Hodgson G."/>
            <person name="Holroyd S."/>
            <person name="Hornsby T."/>
            <person name="Howarth S."/>
            <person name="Huckle E.J."/>
            <person name="Hunt S."/>
            <person name="Jagels K."/>
            <person name="James K.D."/>
            <person name="Jones L."/>
            <person name="Jones M."/>
            <person name="Leather S."/>
            <person name="McDonald S."/>
            <person name="McLean J."/>
            <person name="Mooney P."/>
            <person name="Moule S."/>
            <person name="Mungall K.L."/>
            <person name="Murphy L.D."/>
            <person name="Niblett D."/>
            <person name="Odell C."/>
            <person name="Oliver K."/>
            <person name="O'Neil S."/>
            <person name="Pearson D."/>
            <person name="Quail M.A."/>
            <person name="Rabbinowitsch E."/>
            <person name="Rutherford K.M."/>
            <person name="Rutter S."/>
            <person name="Saunders D."/>
            <person name="Seeger K."/>
            <person name="Sharp S."/>
            <person name="Skelton J."/>
            <person name="Simmonds M.N."/>
            <person name="Squares R."/>
            <person name="Squares S."/>
            <person name="Stevens K."/>
            <person name="Taylor K."/>
            <person name="Taylor R.G."/>
            <person name="Tivey A."/>
            <person name="Walsh S.V."/>
            <person name="Warren T."/>
            <person name="Whitehead S."/>
            <person name="Woodward J.R."/>
            <person name="Volckaert G."/>
            <person name="Aert R."/>
            <person name="Robben J."/>
            <person name="Grymonprez B."/>
            <person name="Weltjens I."/>
            <person name="Vanstreels E."/>
            <person name="Rieger M."/>
            <person name="Schaefer M."/>
            <person name="Mueller-Auer S."/>
            <person name="Gabel C."/>
            <person name="Fuchs M."/>
            <person name="Duesterhoeft A."/>
            <person name="Fritzc C."/>
            <person name="Holzer E."/>
            <person name="Moestl D."/>
            <person name="Hilbert H."/>
            <person name="Borzym K."/>
            <person name="Langer I."/>
            <person name="Beck A."/>
            <person name="Lehrach H."/>
            <person name="Reinhardt R."/>
            <person name="Pohl T.M."/>
            <person name="Eger P."/>
            <person name="Zimmermann W."/>
            <person name="Wedler H."/>
            <person name="Wambutt R."/>
            <person name="Purnelle B."/>
            <person name="Goffeau A."/>
            <person name="Cadieu E."/>
            <person name="Dreano S."/>
            <person name="Gloux S."/>
            <person name="Lelaure V."/>
            <person name="Mottier S."/>
            <person name="Galibert F."/>
            <person name="Aves S.J."/>
            <person name="Xiang Z."/>
            <person name="Hunt C."/>
            <person name="Moore K."/>
            <person name="Hurst S.M."/>
            <person name="Lucas M."/>
            <person name="Rochet M."/>
            <person name="Gaillardin C."/>
            <person name="Tallada V.A."/>
            <person name="Garzon A."/>
            <person name="Thode G."/>
            <person name="Daga R.R."/>
            <person name="Cruzado L."/>
            <person name="Jimenez J."/>
            <person name="Sanchez M."/>
            <person name="del Rey F."/>
            <person name="Benito J."/>
            <person name="Dominguez A."/>
            <person name="Revuelta J.L."/>
            <person name="Moreno S."/>
            <person name="Armstrong J."/>
            <person name="Forsburg S.L."/>
            <person name="Cerutti L."/>
            <person name="Lowe T."/>
            <person name="McCombie W.R."/>
            <person name="Paulsen I."/>
            <person name="Potashkin J."/>
            <person name="Shpakovski G.V."/>
            <person name="Ussery D."/>
            <person name="Barrell B.G."/>
            <person name="Nurse P."/>
        </authorList>
    </citation>
    <scope>NUCLEOTIDE SEQUENCE [LARGE SCALE GENOMIC DNA]</scope>
    <source>
        <strain>972 / ATCC 24843</strain>
    </source>
</reference>
<reference evidence="3" key="2">
    <citation type="journal article" date="2006" name="Nat. Biotechnol.">
        <title>ORFeome cloning and global analysis of protein localization in the fission yeast Schizosaccharomyces pombe.</title>
        <authorList>
            <person name="Matsuyama A."/>
            <person name="Arai R."/>
            <person name="Yashiroda Y."/>
            <person name="Shirai A."/>
            <person name="Kamata A."/>
            <person name="Sekido S."/>
            <person name="Kobayashi Y."/>
            <person name="Hashimoto A."/>
            <person name="Hamamoto M."/>
            <person name="Hiraoka Y."/>
            <person name="Horinouchi S."/>
            <person name="Yoshida M."/>
        </authorList>
    </citation>
    <scope>SUBCELLULAR LOCATION [LARGE SCALE ANALYSIS]</scope>
</reference>
<comment type="subcellular location">
    <subcellularLocation>
        <location evidence="2">Endoplasmic reticulum</location>
    </subcellularLocation>
    <subcellularLocation>
        <location evidence="1">Membrane</location>
        <topology evidence="1">Multi-pass membrane protein</topology>
    </subcellularLocation>
</comment>
<comment type="similarity">
    <text evidence="3">Belongs to the major facilitator superfamily. TCR/Tet family.</text>
</comment>
<name>YQ92_SCHPO</name>
<evidence type="ECO:0000255" key="1"/>
<evidence type="ECO:0000269" key="2">
    <source>
    </source>
</evidence>
<evidence type="ECO:0000305" key="3"/>
<evidence type="ECO:0000312" key="4">
    <source>
        <dbReference type="EMBL" id="CAA21416.1"/>
    </source>
</evidence>
<keyword id="KW-0256">Endoplasmic reticulum</keyword>
<keyword id="KW-0472">Membrane</keyword>
<keyword id="KW-1185">Reference proteome</keyword>
<keyword id="KW-0812">Transmembrane</keyword>
<keyword id="KW-1133">Transmembrane helix</keyword>
<keyword id="KW-0813">Transport</keyword>
<feature type="chain" id="PRO_0000372718" description="Uncharacterized MFS-type transporter C18.02">
    <location>
        <begin position="1"/>
        <end position="448"/>
    </location>
</feature>
<feature type="transmembrane region" description="Helical" evidence="1">
    <location>
        <begin position="14"/>
        <end position="34"/>
    </location>
</feature>
<feature type="transmembrane region" description="Helical" evidence="1">
    <location>
        <begin position="59"/>
        <end position="79"/>
    </location>
</feature>
<feature type="transmembrane region" description="Helical" evidence="1">
    <location>
        <begin position="87"/>
        <end position="107"/>
    </location>
</feature>
<feature type="transmembrane region" description="Helical" evidence="1">
    <location>
        <begin position="120"/>
        <end position="140"/>
    </location>
</feature>
<feature type="transmembrane region" description="Helical" evidence="1">
    <location>
        <begin position="148"/>
        <end position="168"/>
    </location>
</feature>
<feature type="transmembrane region" description="Helical" evidence="1">
    <location>
        <begin position="171"/>
        <end position="191"/>
    </location>
</feature>
<feature type="transmembrane region" description="Helical" evidence="1">
    <location>
        <begin position="250"/>
        <end position="270"/>
    </location>
</feature>
<feature type="transmembrane region" description="Helical" evidence="1">
    <location>
        <begin position="288"/>
        <end position="308"/>
    </location>
</feature>
<feature type="transmembrane region" description="Helical" evidence="1">
    <location>
        <begin position="316"/>
        <end position="333"/>
    </location>
</feature>
<feature type="transmembrane region" description="Helical" evidence="1">
    <location>
        <begin position="338"/>
        <end position="358"/>
    </location>
</feature>
<feature type="transmembrane region" description="Helical" evidence="1">
    <location>
        <begin position="392"/>
        <end position="412"/>
    </location>
</feature>
<feature type="transmembrane region" description="Helical" evidence="1">
    <location>
        <begin position="417"/>
        <end position="437"/>
    </location>
</feature>
<accession>O74852</accession>
<dbReference type="EMBL" id="CU329672">
    <property type="protein sequence ID" value="CAA21416.1"/>
    <property type="molecule type" value="Genomic_DNA"/>
</dbReference>
<dbReference type="PIR" id="T41145">
    <property type="entry name" value="T41145"/>
</dbReference>
<dbReference type="RefSeq" id="NP_588381.1">
    <property type="nucleotide sequence ID" value="NM_001023372.2"/>
</dbReference>
<dbReference type="SMR" id="O74852"/>
<dbReference type="BioGRID" id="275500">
    <property type="interactions" value="4"/>
</dbReference>
<dbReference type="FunCoup" id="O74852">
    <property type="interactions" value="2"/>
</dbReference>
<dbReference type="STRING" id="284812.O74852"/>
<dbReference type="iPTMnet" id="O74852"/>
<dbReference type="PaxDb" id="4896-SPCC18.02.1"/>
<dbReference type="EnsemblFungi" id="SPCC18.02.1">
    <property type="protein sequence ID" value="SPCC18.02.1:pep"/>
    <property type="gene ID" value="SPCC18.02"/>
</dbReference>
<dbReference type="KEGG" id="spo:2538923"/>
<dbReference type="PomBase" id="SPCC18.02"/>
<dbReference type="VEuPathDB" id="FungiDB:SPCC18.02"/>
<dbReference type="eggNOG" id="KOG3764">
    <property type="taxonomic scope" value="Eukaryota"/>
</dbReference>
<dbReference type="HOGENOM" id="CLU_001265_51_3_1"/>
<dbReference type="InParanoid" id="O74852"/>
<dbReference type="OMA" id="FGWCVDR"/>
<dbReference type="PhylomeDB" id="O74852"/>
<dbReference type="Reactome" id="R-SPO-181429">
    <property type="pathway name" value="Serotonin Neurotransmitter Release Cycle"/>
</dbReference>
<dbReference type="Reactome" id="R-SPO-181430">
    <property type="pathway name" value="Norepinephrine Neurotransmitter Release Cycle"/>
</dbReference>
<dbReference type="Reactome" id="R-SPO-212676">
    <property type="pathway name" value="Dopamine Neurotransmitter Release Cycle"/>
</dbReference>
<dbReference type="Reactome" id="R-SPO-442660">
    <property type="pathway name" value="Na+/Cl- dependent neurotransmitter transporters"/>
</dbReference>
<dbReference type="Reactome" id="R-SPO-8856825">
    <property type="pathway name" value="Cargo recognition for clathrin-mediated endocytosis"/>
</dbReference>
<dbReference type="Reactome" id="R-SPO-8856828">
    <property type="pathway name" value="Clathrin-mediated endocytosis"/>
</dbReference>
<dbReference type="PRO" id="PR:O74852"/>
<dbReference type="Proteomes" id="UP000002485">
    <property type="component" value="Chromosome III"/>
</dbReference>
<dbReference type="GO" id="GO:0005783">
    <property type="term" value="C:endoplasmic reticulum"/>
    <property type="evidence" value="ECO:0007005"/>
    <property type="project" value="PomBase"/>
</dbReference>
<dbReference type="GO" id="GO:0016020">
    <property type="term" value="C:membrane"/>
    <property type="evidence" value="ECO:0000255"/>
    <property type="project" value="PomBase"/>
</dbReference>
<dbReference type="GO" id="GO:0022857">
    <property type="term" value="F:transmembrane transporter activity"/>
    <property type="evidence" value="ECO:0000318"/>
    <property type="project" value="GO_Central"/>
</dbReference>
<dbReference type="CDD" id="cd17325">
    <property type="entry name" value="MFS_MdtG_SLC18_like"/>
    <property type="match status" value="1"/>
</dbReference>
<dbReference type="Gene3D" id="1.20.1250.20">
    <property type="entry name" value="MFS general substrate transporter like domains"/>
    <property type="match status" value="2"/>
</dbReference>
<dbReference type="InterPro" id="IPR011701">
    <property type="entry name" value="MFS"/>
</dbReference>
<dbReference type="InterPro" id="IPR020846">
    <property type="entry name" value="MFS_dom"/>
</dbReference>
<dbReference type="InterPro" id="IPR036259">
    <property type="entry name" value="MFS_trans_sf"/>
</dbReference>
<dbReference type="InterPro" id="IPR050930">
    <property type="entry name" value="MFS_Vesicular_Transporter"/>
</dbReference>
<dbReference type="PANTHER" id="PTHR23506">
    <property type="entry name" value="GH10249P"/>
    <property type="match status" value="1"/>
</dbReference>
<dbReference type="PANTHER" id="PTHR23506:SF23">
    <property type="entry name" value="GH10249P"/>
    <property type="match status" value="1"/>
</dbReference>
<dbReference type="Pfam" id="PF07690">
    <property type="entry name" value="MFS_1"/>
    <property type="match status" value="1"/>
</dbReference>
<dbReference type="SUPFAM" id="SSF103473">
    <property type="entry name" value="MFS general substrate transporter"/>
    <property type="match status" value="1"/>
</dbReference>
<dbReference type="PROSITE" id="PS50850">
    <property type="entry name" value="MFS"/>
    <property type="match status" value="1"/>
</dbReference>
<organism>
    <name type="scientific">Schizosaccharomyces pombe (strain 972 / ATCC 24843)</name>
    <name type="common">Fission yeast</name>
    <dbReference type="NCBI Taxonomy" id="284812"/>
    <lineage>
        <taxon>Eukaryota</taxon>
        <taxon>Fungi</taxon>
        <taxon>Dikarya</taxon>
        <taxon>Ascomycota</taxon>
        <taxon>Taphrinomycotina</taxon>
        <taxon>Schizosaccharomycetes</taxon>
        <taxon>Schizosaccharomycetales</taxon>
        <taxon>Schizosaccharomycetaceae</taxon>
        <taxon>Schizosaccharomyces</taxon>
    </lineage>
</organism>
<protein>
    <recommendedName>
        <fullName>Uncharacterized MFS-type transporter C18.02</fullName>
    </recommendedName>
</protein>
<sequence>MGLKLWVKQRRSLPFIIGTIAIALFTDLFLYGIITPILPFSLVDRVGISPDRVQSVISTLLAVYAVANIAASSPIGFLADKFLTRKVPMLIGLIFLTSATALLTFGNSVPMLIVARVLQGLSAAVVWTVGLALLVDVVGADNVGSTMGGIFGFISLGEIIAPVFGGIVYESLGYYASFGVCFIILLLDIALRFLMIEPREMKNDSTLQDVERTSILQRQDTQDHELKPKRSGLFSSLCLPIYSLLHHKQIFGPFWTSFVNSCLFSAFDATIPLELKTLFDFNSLQCGLMFGVLSTPYFFCGAWAGAMVDRRGSRTIGKRAYAILGCTLFLLCIPRTNTSLNIYLFSAFLAINGVVLAFTSSPGFVQSSHYVAEYELEHPTFFGHNGPYTQLFSAYNIVYSLGMIIGPLVAGFLRDQFNFITSIACLSLLCFSASLMANSCFTDRLDSE</sequence>